<keyword id="KW-0030">Aminoacyl-tRNA synthetase</keyword>
<keyword id="KW-0067">ATP-binding</keyword>
<keyword id="KW-0963">Cytoplasm</keyword>
<keyword id="KW-0436">Ligase</keyword>
<keyword id="KW-0479">Metal-binding</keyword>
<keyword id="KW-0547">Nucleotide-binding</keyword>
<keyword id="KW-0648">Protein biosynthesis</keyword>
<keyword id="KW-0862">Zinc</keyword>
<proteinExistence type="inferred from homology"/>
<evidence type="ECO:0000255" key="1">
    <source>
        <dbReference type="HAMAP-Rule" id="MF_02002"/>
    </source>
</evidence>
<sequence length="943" mass="104739">MTQDYKATLHLPATEFPMRGDLPKREPAMLERWEREGFYAQLRANAAGRPLFVLHDGPPYANGQIHLGHAVNKILKDIIVKSKYLAGFDAPYIPGWDCHGLPIEIAIEKKYGKVGVKLDAAEFRQKCREYATEQIDLQRRDFKRLGVIGDWDNPYKTLDFRFEANEIRALAKVVDNGHLTRGVKPVHWCFDCGSALAEAEIEYADKVSPTVDIAYPARDPAAVAAAFGASLPAGVGVAVPIWTTTPWTLPASLAVSLGAELDYVLVEGPADRGQPRWLVIAEALAAKALARYGVGEVVVHGHAKGAALEHMLLNHPFYAEREIPLLLGDHVSAEDGTGAVHTAPGHGQEDYQVSKQYGLLERYGAAQINPVDGRGVYLPSTPPLRDTVLAGLHIWKANDVIIEALRETGVLLAASKMEHSYPHCWRHKTPIAFRATPQWFISMEQANLRADALKAIENVHWYPSWGQARIAGMVDGRPDWTISRQRTWGVPIALFVHRETGEPHPRSTELLRQVADRVEQGGVDVWYTLDASELLSSEAADYEKITDILDVWFDSGVTHEAVLPDRGLPKPADLYLEGSDQHRGWFQSSLLSGVAMDKAAPYKQCLTHGFTVDEHGRKMSKSLGNGIEPQDIMKTLGADILRLWIASADYSNEMSLSQEILKRNADAYRRLRNTARFLLGNLHGFDPLQHLVALDEMVLLDRWIVHRAHELQEKIVAAYARYDFAEIVQALLNFCSVDLGSLYLDVTKDRLYTMAEDARGRRSAQSAMYHVAEAFVRWIAPVLSFTAEELWGYLPGKHVDNVLFATWYDGLAPLPADAALSGADFDKLLVLREQVAKVLEPMRANGAIGAALEAEITVAADAQTAARWQPLAEELRFLFISGDVTVTAASTDDIFVSAQPTTKAKCVRCWHHQASVGSDPRHPELCSRCVSNIEGPGERRRWF</sequence>
<feature type="chain" id="PRO_0000098504" description="Isoleucine--tRNA ligase">
    <location>
        <begin position="1"/>
        <end position="943"/>
    </location>
</feature>
<feature type="short sequence motif" description="'HIGH' region">
    <location>
        <begin position="59"/>
        <end position="69"/>
    </location>
</feature>
<feature type="short sequence motif" description="'KMSKS' region">
    <location>
        <begin position="618"/>
        <end position="622"/>
    </location>
</feature>
<feature type="binding site" evidence="1">
    <location>
        <position position="577"/>
    </location>
    <ligand>
        <name>L-isoleucyl-5'-AMP</name>
        <dbReference type="ChEBI" id="CHEBI:178002"/>
    </ligand>
</feature>
<feature type="binding site" evidence="1">
    <location>
        <position position="621"/>
    </location>
    <ligand>
        <name>ATP</name>
        <dbReference type="ChEBI" id="CHEBI:30616"/>
    </ligand>
</feature>
<feature type="binding site" evidence="1">
    <location>
        <position position="906"/>
    </location>
    <ligand>
        <name>Zn(2+)</name>
        <dbReference type="ChEBI" id="CHEBI:29105"/>
    </ligand>
</feature>
<feature type="binding site" evidence="1">
    <location>
        <position position="909"/>
    </location>
    <ligand>
        <name>Zn(2+)</name>
        <dbReference type="ChEBI" id="CHEBI:29105"/>
    </ligand>
</feature>
<feature type="binding site" evidence="1">
    <location>
        <position position="926"/>
    </location>
    <ligand>
        <name>Zn(2+)</name>
        <dbReference type="ChEBI" id="CHEBI:29105"/>
    </ligand>
</feature>
<feature type="binding site" evidence="1">
    <location>
        <position position="929"/>
    </location>
    <ligand>
        <name>Zn(2+)</name>
        <dbReference type="ChEBI" id="CHEBI:29105"/>
    </ligand>
</feature>
<name>SYI_XANAC</name>
<dbReference type="EC" id="6.1.1.5" evidence="1"/>
<dbReference type="EMBL" id="AE008923">
    <property type="protein sequence ID" value="AAM36126.1"/>
    <property type="molecule type" value="Genomic_DNA"/>
</dbReference>
<dbReference type="RefSeq" id="WP_011050802.1">
    <property type="nucleotide sequence ID" value="NC_003919.1"/>
</dbReference>
<dbReference type="SMR" id="Q8PN19"/>
<dbReference type="GeneID" id="66910424"/>
<dbReference type="KEGG" id="xac:XAC1254"/>
<dbReference type="eggNOG" id="COG0060">
    <property type="taxonomic scope" value="Bacteria"/>
</dbReference>
<dbReference type="HOGENOM" id="CLU_001493_7_1_6"/>
<dbReference type="Proteomes" id="UP000000576">
    <property type="component" value="Chromosome"/>
</dbReference>
<dbReference type="GO" id="GO:0005829">
    <property type="term" value="C:cytosol"/>
    <property type="evidence" value="ECO:0007669"/>
    <property type="project" value="TreeGrafter"/>
</dbReference>
<dbReference type="GO" id="GO:0002161">
    <property type="term" value="F:aminoacyl-tRNA deacylase activity"/>
    <property type="evidence" value="ECO:0007669"/>
    <property type="project" value="InterPro"/>
</dbReference>
<dbReference type="GO" id="GO:0005524">
    <property type="term" value="F:ATP binding"/>
    <property type="evidence" value="ECO:0007669"/>
    <property type="project" value="UniProtKB-UniRule"/>
</dbReference>
<dbReference type="GO" id="GO:0004822">
    <property type="term" value="F:isoleucine-tRNA ligase activity"/>
    <property type="evidence" value="ECO:0007669"/>
    <property type="project" value="UniProtKB-UniRule"/>
</dbReference>
<dbReference type="GO" id="GO:0000049">
    <property type="term" value="F:tRNA binding"/>
    <property type="evidence" value="ECO:0007669"/>
    <property type="project" value="InterPro"/>
</dbReference>
<dbReference type="GO" id="GO:0008270">
    <property type="term" value="F:zinc ion binding"/>
    <property type="evidence" value="ECO:0007669"/>
    <property type="project" value="UniProtKB-UniRule"/>
</dbReference>
<dbReference type="GO" id="GO:0006428">
    <property type="term" value="P:isoleucyl-tRNA aminoacylation"/>
    <property type="evidence" value="ECO:0007669"/>
    <property type="project" value="UniProtKB-UniRule"/>
</dbReference>
<dbReference type="CDD" id="cd07960">
    <property type="entry name" value="Anticodon_Ia_Ile_BEm"/>
    <property type="match status" value="1"/>
</dbReference>
<dbReference type="FunFam" id="1.10.730.20:FF:000001">
    <property type="entry name" value="Isoleucine--tRNA ligase"/>
    <property type="match status" value="1"/>
</dbReference>
<dbReference type="FunFam" id="3.40.50.620:FF:000042">
    <property type="entry name" value="Isoleucine--tRNA ligase"/>
    <property type="match status" value="1"/>
</dbReference>
<dbReference type="FunFam" id="3.40.50.620:FF:000048">
    <property type="entry name" value="Isoleucine--tRNA ligase"/>
    <property type="match status" value="1"/>
</dbReference>
<dbReference type="FunFam" id="3.90.740.10:FF:000022">
    <property type="entry name" value="Isoleucine--tRNA ligase"/>
    <property type="match status" value="1"/>
</dbReference>
<dbReference type="Gene3D" id="1.10.730.20">
    <property type="match status" value="1"/>
</dbReference>
<dbReference type="Gene3D" id="3.40.50.620">
    <property type="entry name" value="HUPs"/>
    <property type="match status" value="2"/>
</dbReference>
<dbReference type="Gene3D" id="1.10.10.830">
    <property type="entry name" value="Ile-tRNA synthetase CP2 domain-like"/>
    <property type="match status" value="1"/>
</dbReference>
<dbReference type="Gene3D" id="3.90.740.10">
    <property type="entry name" value="Valyl/Leucyl/Isoleucyl-tRNA synthetase, editing domain"/>
    <property type="match status" value="1"/>
</dbReference>
<dbReference type="HAMAP" id="MF_02002">
    <property type="entry name" value="Ile_tRNA_synth_type1"/>
    <property type="match status" value="1"/>
</dbReference>
<dbReference type="InterPro" id="IPR001412">
    <property type="entry name" value="aa-tRNA-synth_I_CS"/>
</dbReference>
<dbReference type="InterPro" id="IPR002300">
    <property type="entry name" value="aa-tRNA-synth_Ia"/>
</dbReference>
<dbReference type="InterPro" id="IPR033708">
    <property type="entry name" value="Anticodon_Ile_BEm"/>
</dbReference>
<dbReference type="InterPro" id="IPR002301">
    <property type="entry name" value="Ile-tRNA-ligase"/>
</dbReference>
<dbReference type="InterPro" id="IPR023585">
    <property type="entry name" value="Ile-tRNA-ligase_type1"/>
</dbReference>
<dbReference type="InterPro" id="IPR050081">
    <property type="entry name" value="Ile-tRNA_ligase"/>
</dbReference>
<dbReference type="InterPro" id="IPR013155">
    <property type="entry name" value="M/V/L/I-tRNA-synth_anticd-bd"/>
</dbReference>
<dbReference type="InterPro" id="IPR014729">
    <property type="entry name" value="Rossmann-like_a/b/a_fold"/>
</dbReference>
<dbReference type="InterPro" id="IPR009080">
    <property type="entry name" value="tRNAsynth_Ia_anticodon-bd"/>
</dbReference>
<dbReference type="InterPro" id="IPR009008">
    <property type="entry name" value="Val/Leu/Ile-tRNA-synth_edit"/>
</dbReference>
<dbReference type="InterPro" id="IPR010663">
    <property type="entry name" value="Znf_FPG/IleRS"/>
</dbReference>
<dbReference type="NCBIfam" id="TIGR00392">
    <property type="entry name" value="ileS"/>
    <property type="match status" value="1"/>
</dbReference>
<dbReference type="PANTHER" id="PTHR42765:SF1">
    <property type="entry name" value="ISOLEUCINE--TRNA LIGASE, MITOCHONDRIAL"/>
    <property type="match status" value="1"/>
</dbReference>
<dbReference type="PANTHER" id="PTHR42765">
    <property type="entry name" value="SOLEUCYL-TRNA SYNTHETASE"/>
    <property type="match status" value="1"/>
</dbReference>
<dbReference type="Pfam" id="PF08264">
    <property type="entry name" value="Anticodon_1"/>
    <property type="match status" value="1"/>
</dbReference>
<dbReference type="Pfam" id="PF00133">
    <property type="entry name" value="tRNA-synt_1"/>
    <property type="match status" value="1"/>
</dbReference>
<dbReference type="Pfam" id="PF06827">
    <property type="entry name" value="zf-FPG_IleRS"/>
    <property type="match status" value="1"/>
</dbReference>
<dbReference type="PRINTS" id="PR00984">
    <property type="entry name" value="TRNASYNTHILE"/>
</dbReference>
<dbReference type="SUPFAM" id="SSF47323">
    <property type="entry name" value="Anticodon-binding domain of a subclass of class I aminoacyl-tRNA synthetases"/>
    <property type="match status" value="1"/>
</dbReference>
<dbReference type="SUPFAM" id="SSF52374">
    <property type="entry name" value="Nucleotidylyl transferase"/>
    <property type="match status" value="1"/>
</dbReference>
<dbReference type="SUPFAM" id="SSF50677">
    <property type="entry name" value="ValRS/IleRS/LeuRS editing domain"/>
    <property type="match status" value="1"/>
</dbReference>
<dbReference type="PROSITE" id="PS00178">
    <property type="entry name" value="AA_TRNA_LIGASE_I"/>
    <property type="match status" value="1"/>
</dbReference>
<organism>
    <name type="scientific">Xanthomonas axonopodis pv. citri (strain 306)</name>
    <dbReference type="NCBI Taxonomy" id="190486"/>
    <lineage>
        <taxon>Bacteria</taxon>
        <taxon>Pseudomonadati</taxon>
        <taxon>Pseudomonadota</taxon>
        <taxon>Gammaproteobacteria</taxon>
        <taxon>Lysobacterales</taxon>
        <taxon>Lysobacteraceae</taxon>
        <taxon>Xanthomonas</taxon>
    </lineage>
</organism>
<protein>
    <recommendedName>
        <fullName evidence="1">Isoleucine--tRNA ligase</fullName>
        <ecNumber evidence="1">6.1.1.5</ecNumber>
    </recommendedName>
    <alternativeName>
        <fullName evidence="1">Isoleucyl-tRNA synthetase</fullName>
        <shortName evidence="1">IleRS</shortName>
    </alternativeName>
</protein>
<gene>
    <name evidence="1" type="primary">ileS</name>
    <name type="ordered locus">XAC1254</name>
</gene>
<accession>Q8PN19</accession>
<reference key="1">
    <citation type="journal article" date="2002" name="Nature">
        <title>Comparison of the genomes of two Xanthomonas pathogens with differing host specificities.</title>
        <authorList>
            <person name="da Silva A.C.R."/>
            <person name="Ferro J.A."/>
            <person name="Reinach F.C."/>
            <person name="Farah C.S."/>
            <person name="Furlan L.R."/>
            <person name="Quaggio R.B."/>
            <person name="Monteiro-Vitorello C.B."/>
            <person name="Van Sluys M.A."/>
            <person name="Almeida N.F. Jr."/>
            <person name="Alves L.M.C."/>
            <person name="do Amaral A.M."/>
            <person name="Bertolini M.C."/>
            <person name="Camargo L.E.A."/>
            <person name="Camarotte G."/>
            <person name="Cannavan F."/>
            <person name="Cardozo J."/>
            <person name="Chambergo F."/>
            <person name="Ciapina L.P."/>
            <person name="Cicarelli R.M.B."/>
            <person name="Coutinho L.L."/>
            <person name="Cursino-Santos J.R."/>
            <person name="El-Dorry H."/>
            <person name="Faria J.B."/>
            <person name="Ferreira A.J.S."/>
            <person name="Ferreira R.C.C."/>
            <person name="Ferro M.I.T."/>
            <person name="Formighieri E.F."/>
            <person name="Franco M.C."/>
            <person name="Greggio C.C."/>
            <person name="Gruber A."/>
            <person name="Katsuyama A.M."/>
            <person name="Kishi L.T."/>
            <person name="Leite R.P."/>
            <person name="Lemos E.G.M."/>
            <person name="Lemos M.V.F."/>
            <person name="Locali E.C."/>
            <person name="Machado M.A."/>
            <person name="Madeira A.M.B.N."/>
            <person name="Martinez-Rossi N.M."/>
            <person name="Martins E.C."/>
            <person name="Meidanis J."/>
            <person name="Menck C.F.M."/>
            <person name="Miyaki C.Y."/>
            <person name="Moon D.H."/>
            <person name="Moreira L.M."/>
            <person name="Novo M.T.M."/>
            <person name="Okura V.K."/>
            <person name="Oliveira M.C."/>
            <person name="Oliveira V.R."/>
            <person name="Pereira H.A."/>
            <person name="Rossi A."/>
            <person name="Sena J.A.D."/>
            <person name="Silva C."/>
            <person name="de Souza R.F."/>
            <person name="Spinola L.A.F."/>
            <person name="Takita M.A."/>
            <person name="Tamura R.E."/>
            <person name="Teixeira E.C."/>
            <person name="Tezza R.I.D."/>
            <person name="Trindade dos Santos M."/>
            <person name="Truffi D."/>
            <person name="Tsai S.M."/>
            <person name="White F.F."/>
            <person name="Setubal J.C."/>
            <person name="Kitajima J.P."/>
        </authorList>
    </citation>
    <scope>NUCLEOTIDE SEQUENCE [LARGE SCALE GENOMIC DNA]</scope>
    <source>
        <strain>306</strain>
    </source>
</reference>
<comment type="function">
    <text evidence="1">Catalyzes the attachment of isoleucine to tRNA(Ile). As IleRS can inadvertently accommodate and process structurally similar amino acids such as valine, to avoid such errors it has two additional distinct tRNA(Ile)-dependent editing activities. One activity is designated as 'pretransfer' editing and involves the hydrolysis of activated Val-AMP. The other activity is designated 'posttransfer' editing and involves deacylation of mischarged Val-tRNA(Ile).</text>
</comment>
<comment type="catalytic activity">
    <reaction evidence="1">
        <text>tRNA(Ile) + L-isoleucine + ATP = L-isoleucyl-tRNA(Ile) + AMP + diphosphate</text>
        <dbReference type="Rhea" id="RHEA:11060"/>
        <dbReference type="Rhea" id="RHEA-COMP:9666"/>
        <dbReference type="Rhea" id="RHEA-COMP:9695"/>
        <dbReference type="ChEBI" id="CHEBI:30616"/>
        <dbReference type="ChEBI" id="CHEBI:33019"/>
        <dbReference type="ChEBI" id="CHEBI:58045"/>
        <dbReference type="ChEBI" id="CHEBI:78442"/>
        <dbReference type="ChEBI" id="CHEBI:78528"/>
        <dbReference type="ChEBI" id="CHEBI:456215"/>
        <dbReference type="EC" id="6.1.1.5"/>
    </reaction>
</comment>
<comment type="cofactor">
    <cofactor evidence="1">
        <name>Zn(2+)</name>
        <dbReference type="ChEBI" id="CHEBI:29105"/>
    </cofactor>
    <text evidence="1">Binds 1 zinc ion per subunit.</text>
</comment>
<comment type="subunit">
    <text evidence="1">Monomer.</text>
</comment>
<comment type="subcellular location">
    <subcellularLocation>
        <location evidence="1">Cytoplasm</location>
    </subcellularLocation>
</comment>
<comment type="domain">
    <text evidence="1">IleRS has two distinct active sites: one for aminoacylation and one for editing. The misactivated valine is translocated from the active site to the editing site, which sterically excludes the correctly activated isoleucine. The single editing site contains two valyl binding pockets, one specific for each substrate (Val-AMP or Val-tRNA(Ile)).</text>
</comment>
<comment type="similarity">
    <text evidence="1">Belongs to the class-I aminoacyl-tRNA synthetase family. IleS type 1 subfamily.</text>
</comment>